<name>Y1025_PSEF5</name>
<proteinExistence type="inferred from homology"/>
<organism>
    <name type="scientific">Pseudomonas fluorescens (strain ATCC BAA-477 / NRRL B-23932 / Pf-5)</name>
    <dbReference type="NCBI Taxonomy" id="220664"/>
    <lineage>
        <taxon>Bacteria</taxon>
        <taxon>Pseudomonadati</taxon>
        <taxon>Pseudomonadota</taxon>
        <taxon>Gammaproteobacteria</taxon>
        <taxon>Pseudomonadales</taxon>
        <taxon>Pseudomonadaceae</taxon>
        <taxon>Pseudomonas</taxon>
    </lineage>
</organism>
<protein>
    <recommendedName>
        <fullName evidence="1">UPF0246 protein PFL_1025</fullName>
    </recommendedName>
</protein>
<comment type="similarity">
    <text evidence="1">Belongs to the UPF0246 family.</text>
</comment>
<reference key="1">
    <citation type="journal article" date="2005" name="Nat. Biotechnol.">
        <title>Complete genome sequence of the plant commensal Pseudomonas fluorescens Pf-5.</title>
        <authorList>
            <person name="Paulsen I.T."/>
            <person name="Press C.M."/>
            <person name="Ravel J."/>
            <person name="Kobayashi D.Y."/>
            <person name="Myers G.S.A."/>
            <person name="Mavrodi D.V."/>
            <person name="DeBoy R.T."/>
            <person name="Seshadri R."/>
            <person name="Ren Q."/>
            <person name="Madupu R."/>
            <person name="Dodson R.J."/>
            <person name="Durkin A.S."/>
            <person name="Brinkac L.M."/>
            <person name="Daugherty S.C."/>
            <person name="Sullivan S.A."/>
            <person name="Rosovitz M.J."/>
            <person name="Gwinn M.L."/>
            <person name="Zhou L."/>
            <person name="Schneider D.J."/>
            <person name="Cartinhour S.W."/>
            <person name="Nelson W.C."/>
            <person name="Weidman J."/>
            <person name="Watkins K."/>
            <person name="Tran K."/>
            <person name="Khouri H."/>
            <person name="Pierson E.A."/>
            <person name="Pierson L.S. III"/>
            <person name="Thomashow L.S."/>
            <person name="Loper J.E."/>
        </authorList>
    </citation>
    <scope>NUCLEOTIDE SEQUENCE [LARGE SCALE GENOMIC DNA]</scope>
    <source>
        <strain>ATCC BAA-477 / NRRL B-23932 / Pf-5</strain>
    </source>
</reference>
<sequence length="259" mass="29477">MLMVISPAKTLDYETPPVTQRFTQPQYLDHSQELIQQLRELTPAQISELMHVSDKIGGLNAARFGSWTPAFTPDNAKQALLAFKGDVYTGLNAETLSEADFDYAQQHLRMLSGLYGLLRPLDLMQPYRLEMGTKLANARGKDLYAFWGTRISEWLNEALAEQGDDLLLNLASNEYFSAVKRTALNARIINTEFKDLKNGQYKIISFYAKKARGLMSRFVIQERINDPAQLKQFDVQGYRFSAEQSKADNLVFLRDHAPE</sequence>
<accession>Q4KHX7</accession>
<feature type="chain" id="PRO_0000262040" description="UPF0246 protein PFL_1025">
    <location>
        <begin position="1"/>
        <end position="259"/>
    </location>
</feature>
<gene>
    <name type="ordered locus">PFL_1025</name>
</gene>
<evidence type="ECO:0000255" key="1">
    <source>
        <dbReference type="HAMAP-Rule" id="MF_00652"/>
    </source>
</evidence>
<dbReference type="EMBL" id="CP000076">
    <property type="protein sequence ID" value="AAY90312.1"/>
    <property type="molecule type" value="Genomic_DNA"/>
</dbReference>
<dbReference type="SMR" id="Q4KHX7"/>
<dbReference type="STRING" id="220664.PFL_1025"/>
<dbReference type="KEGG" id="pfl:PFL_1025"/>
<dbReference type="PATRIC" id="fig|220664.5.peg.1052"/>
<dbReference type="eggNOG" id="COG3022">
    <property type="taxonomic scope" value="Bacteria"/>
</dbReference>
<dbReference type="HOGENOM" id="CLU_061989_0_0_6"/>
<dbReference type="Proteomes" id="UP000008540">
    <property type="component" value="Chromosome"/>
</dbReference>
<dbReference type="GO" id="GO:0005829">
    <property type="term" value="C:cytosol"/>
    <property type="evidence" value="ECO:0007669"/>
    <property type="project" value="TreeGrafter"/>
</dbReference>
<dbReference type="GO" id="GO:0033194">
    <property type="term" value="P:response to hydroperoxide"/>
    <property type="evidence" value="ECO:0007669"/>
    <property type="project" value="TreeGrafter"/>
</dbReference>
<dbReference type="HAMAP" id="MF_00652">
    <property type="entry name" value="UPF0246"/>
    <property type="match status" value="1"/>
</dbReference>
<dbReference type="InterPro" id="IPR005583">
    <property type="entry name" value="YaaA"/>
</dbReference>
<dbReference type="NCBIfam" id="NF002541">
    <property type="entry name" value="PRK02101.1-1"/>
    <property type="match status" value="1"/>
</dbReference>
<dbReference type="NCBIfam" id="NF002542">
    <property type="entry name" value="PRK02101.1-3"/>
    <property type="match status" value="1"/>
</dbReference>
<dbReference type="PANTHER" id="PTHR30283:SF4">
    <property type="entry name" value="PEROXIDE STRESS RESISTANCE PROTEIN YAAA"/>
    <property type="match status" value="1"/>
</dbReference>
<dbReference type="PANTHER" id="PTHR30283">
    <property type="entry name" value="PEROXIDE STRESS RESPONSE PROTEIN YAAA"/>
    <property type="match status" value="1"/>
</dbReference>
<dbReference type="Pfam" id="PF03883">
    <property type="entry name" value="H2O2_YaaD"/>
    <property type="match status" value="1"/>
</dbReference>